<organism>
    <name type="scientific">Bombina orientalis</name>
    <name type="common">Oriental fire-bellied toad</name>
    <dbReference type="NCBI Taxonomy" id="8346"/>
    <lineage>
        <taxon>Eukaryota</taxon>
        <taxon>Metazoa</taxon>
        <taxon>Chordata</taxon>
        <taxon>Craniata</taxon>
        <taxon>Vertebrata</taxon>
        <taxon>Euteleostomi</taxon>
        <taxon>Amphibia</taxon>
        <taxon>Batrachia</taxon>
        <taxon>Anura</taxon>
        <taxon>Bombinatoridae</taxon>
        <taxon>Bombina</taxon>
    </lineage>
</organism>
<protein>
    <recommendedName>
        <fullName>Bombinin-like peptide 4</fullName>
        <shortName>BLP-4</shortName>
    </recommendedName>
</protein>
<name>BMNL4_BOMOR</name>
<sequence>GIGAAILSAGKSIIKGLANGLAEHF</sequence>
<keyword id="KW-0027">Amidation</keyword>
<keyword id="KW-0878">Amphibian defense peptide</keyword>
<keyword id="KW-0044">Antibiotic</keyword>
<keyword id="KW-0929">Antimicrobial</keyword>
<keyword id="KW-0903">Direct protein sequencing</keyword>
<keyword id="KW-0964">Secreted</keyword>
<comment type="function">
    <text>Has antimicrobial activity, but no hemolytic activity. Preference on killing Gram-negative non-enteric bacteria.</text>
</comment>
<comment type="subcellular location">
    <subcellularLocation>
        <location>Secreted</location>
    </subcellularLocation>
</comment>
<comment type="tissue specificity">
    <text>Expressed by the skin glands.</text>
</comment>
<comment type="similarity">
    <text evidence="2">Belongs to the bombinin family.</text>
</comment>
<evidence type="ECO:0000269" key="1">
    <source>
    </source>
</evidence>
<evidence type="ECO:0000305" key="2"/>
<reference key="1">
    <citation type="journal article" date="1991" name="J. Biol. Chem.">
        <title>Bombinin-like peptides with antimicrobial activity from skin secretions of the Asian toad, Bombina orientalis.</title>
        <authorList>
            <person name="Gibson B.W."/>
            <person name="Tang D."/>
            <person name="Mandrell R."/>
            <person name="Kelly M."/>
            <person name="Spindel E.R."/>
        </authorList>
    </citation>
    <scope>PROTEIN SEQUENCE</scope>
    <scope>AMIDATION AT PHE-25</scope>
    <source>
        <tissue>Skin secretion</tissue>
    </source>
</reference>
<accession>P29005</accession>
<dbReference type="PIR" id="D41575">
    <property type="entry name" value="D41575"/>
</dbReference>
<dbReference type="SMR" id="P29005"/>
<dbReference type="GO" id="GO:0005576">
    <property type="term" value="C:extracellular region"/>
    <property type="evidence" value="ECO:0007669"/>
    <property type="project" value="UniProtKB-SubCell"/>
</dbReference>
<dbReference type="GO" id="GO:0042742">
    <property type="term" value="P:defense response to bacterium"/>
    <property type="evidence" value="ECO:0007669"/>
    <property type="project" value="UniProtKB-KW"/>
</dbReference>
<feature type="peptide" id="PRO_0000043502" description="Bombinin-like peptide 4">
    <location>
        <begin position="1"/>
        <end position="25"/>
    </location>
</feature>
<feature type="modified residue" description="Phenylalanine amide" evidence="1">
    <location>
        <position position="25"/>
    </location>
</feature>
<proteinExistence type="evidence at protein level"/>